<feature type="chain" id="PRO_0000425434" description="Oligouridylate-binding protein 1A">
    <location>
        <begin position="1"/>
        <end position="426"/>
    </location>
</feature>
<feature type="domain" description="RRM 1" evidence="3">
    <location>
        <begin position="63"/>
        <end position="137"/>
    </location>
</feature>
<feature type="domain" description="RRM 2" evidence="3">
    <location>
        <begin position="148"/>
        <end position="226"/>
    </location>
</feature>
<feature type="domain" description="RRM 3" evidence="3">
    <location>
        <begin position="269"/>
        <end position="344"/>
    </location>
</feature>
<feature type="region of interest" description="Disordered" evidence="4">
    <location>
        <begin position="1"/>
        <end position="26"/>
    </location>
</feature>
<feature type="region of interest" description="Disordered" evidence="4">
    <location>
        <begin position="230"/>
        <end position="268"/>
    </location>
</feature>
<feature type="compositionally biased region" description="Low complexity" evidence="4">
    <location>
        <begin position="9"/>
        <end position="26"/>
    </location>
</feature>
<feature type="modified residue" description="Phosphoserine" evidence="2">
    <location>
        <position position="250"/>
    </location>
</feature>
<organism>
    <name type="scientific">Arabidopsis thaliana</name>
    <name type="common">Mouse-ear cress</name>
    <dbReference type="NCBI Taxonomy" id="3702"/>
    <lineage>
        <taxon>Eukaryota</taxon>
        <taxon>Viridiplantae</taxon>
        <taxon>Streptophyta</taxon>
        <taxon>Embryophyta</taxon>
        <taxon>Tracheophyta</taxon>
        <taxon>Spermatophyta</taxon>
        <taxon>Magnoliopsida</taxon>
        <taxon>eudicotyledons</taxon>
        <taxon>Gunneridae</taxon>
        <taxon>Pentapetalae</taxon>
        <taxon>rosids</taxon>
        <taxon>malvids</taxon>
        <taxon>Brassicales</taxon>
        <taxon>Brassicaceae</taxon>
        <taxon>Camelineae</taxon>
        <taxon>Arabidopsis</taxon>
    </lineage>
</organism>
<gene>
    <name type="primary">UBP1A</name>
    <name type="ordered locus">At1g54080</name>
    <name type="ORF">F15I1.16</name>
</gene>
<comment type="function">
    <text evidence="1">Heterogeneous nuclear ribonucleoprotein (hnRNP)-like protein that acts as a component of the pre-mRNA processing machinery. Functions to facilitate the nuclear maturation of plant pre-mRNAs (By similarity).</text>
</comment>
<comment type="subunit">
    <text evidence="5">Interacts with UBA1A and UBA2A.</text>
</comment>
<comment type="interaction">
    <interactant intactId="EBI-346310">
        <id>Q9SYG4</id>
    </interactant>
    <interactant intactId="EBI-346271">
        <id>Q9SHZ6</id>
        <label>UBA1A</label>
    </interactant>
    <organismsDiffer>false</organismsDiffer>
    <experiments>4</experiments>
</comment>
<comment type="subcellular location">
    <subcellularLocation>
        <location evidence="1">Nucleus</location>
    </subcellularLocation>
</comment>
<comment type="alternative products">
    <event type="alternative splicing"/>
    <isoform>
        <id>Q9SYG4-1</id>
        <name>1</name>
        <sequence type="displayed"/>
    </isoform>
    <text>A number of isoforms are produced. According to EST sequences.</text>
</comment>
<proteinExistence type="evidence at protein level"/>
<name>UBP1A_ARATH</name>
<protein>
    <recommendedName>
        <fullName>Oligouridylate-binding protein 1A</fullName>
        <shortName>AtUBP1a</shortName>
    </recommendedName>
    <alternativeName>
        <fullName>Polyuridylate-binding protein UBP1A</fullName>
        <shortName>Poly(U)-binding protein UBP1A</shortName>
    </alternativeName>
</protein>
<dbReference type="EMBL" id="AC006577">
    <property type="protein sequence ID" value="AAD25780.1"/>
    <property type="molecule type" value="Genomic_DNA"/>
</dbReference>
<dbReference type="EMBL" id="CP002684">
    <property type="protein sequence ID" value="AEE33045.1"/>
    <property type="molecule type" value="Genomic_DNA"/>
</dbReference>
<dbReference type="EMBL" id="AF348587">
    <property type="protein sequence ID" value="AAK15558.1"/>
    <property type="molecule type" value="mRNA"/>
</dbReference>
<dbReference type="EMBL" id="AF361639">
    <property type="protein sequence ID" value="AAK32807.1"/>
    <property type="molecule type" value="mRNA"/>
</dbReference>
<dbReference type="EMBL" id="AY133610">
    <property type="protein sequence ID" value="AAM91440.1"/>
    <property type="molecule type" value="mRNA"/>
</dbReference>
<dbReference type="PIR" id="E96581">
    <property type="entry name" value="E96581"/>
</dbReference>
<dbReference type="RefSeq" id="NP_175810.1">
    <molecule id="Q9SYG4-1"/>
    <property type="nucleotide sequence ID" value="NM_104285.5"/>
</dbReference>
<dbReference type="SMR" id="Q9SYG4"/>
<dbReference type="BioGRID" id="27071">
    <property type="interactions" value="1"/>
</dbReference>
<dbReference type="FunCoup" id="Q9SYG4">
    <property type="interactions" value="4047"/>
</dbReference>
<dbReference type="IntAct" id="Q9SYG4">
    <property type="interactions" value="2"/>
</dbReference>
<dbReference type="STRING" id="3702.Q9SYG4"/>
<dbReference type="GlyGen" id="Q9SYG4">
    <property type="glycosylation" value="1 site"/>
</dbReference>
<dbReference type="iPTMnet" id="Q9SYG4"/>
<dbReference type="PaxDb" id="3702-AT1G54080.2"/>
<dbReference type="ProteomicsDB" id="228482">
    <molecule id="Q9SYG4-1"/>
</dbReference>
<dbReference type="EnsemblPlants" id="AT1G54080.1">
    <molecule id="Q9SYG4-1"/>
    <property type="protein sequence ID" value="AT1G54080.1"/>
    <property type="gene ID" value="AT1G54080"/>
</dbReference>
<dbReference type="GeneID" id="841846"/>
<dbReference type="Gramene" id="AT1G54080.1">
    <molecule id="Q9SYG4-1"/>
    <property type="protein sequence ID" value="AT1G54080.1"/>
    <property type="gene ID" value="AT1G54080"/>
</dbReference>
<dbReference type="KEGG" id="ath:AT1G54080"/>
<dbReference type="Araport" id="AT1G54080"/>
<dbReference type="TAIR" id="AT1G54080">
    <property type="gene designation" value="UBP1A"/>
</dbReference>
<dbReference type="eggNOG" id="KOG0118">
    <property type="taxonomic scope" value="Eukaryota"/>
</dbReference>
<dbReference type="InParanoid" id="Q9SYG4"/>
<dbReference type="PhylomeDB" id="Q9SYG4"/>
<dbReference type="PRO" id="PR:Q9SYG4"/>
<dbReference type="Proteomes" id="UP000006548">
    <property type="component" value="Chromosome 1"/>
</dbReference>
<dbReference type="ExpressionAtlas" id="Q9SYG4">
    <property type="expression patterns" value="baseline and differential"/>
</dbReference>
<dbReference type="GO" id="GO:0005634">
    <property type="term" value="C:nucleus"/>
    <property type="evidence" value="ECO:0007669"/>
    <property type="project" value="UniProtKB-SubCell"/>
</dbReference>
<dbReference type="GO" id="GO:0003729">
    <property type="term" value="F:mRNA binding"/>
    <property type="evidence" value="ECO:0007669"/>
    <property type="project" value="InterPro"/>
</dbReference>
<dbReference type="GO" id="GO:0006397">
    <property type="term" value="P:mRNA processing"/>
    <property type="evidence" value="ECO:0007669"/>
    <property type="project" value="UniProtKB-KW"/>
</dbReference>
<dbReference type="CDD" id="cd12614">
    <property type="entry name" value="RRM1_PUB1"/>
    <property type="match status" value="1"/>
</dbReference>
<dbReference type="CDD" id="cd12619">
    <property type="entry name" value="RRM2_PUB1"/>
    <property type="match status" value="1"/>
</dbReference>
<dbReference type="FunFam" id="3.30.70.330:FF:000301">
    <property type="entry name" value="Nucleolysin TIAR-like protein"/>
    <property type="match status" value="1"/>
</dbReference>
<dbReference type="FunFam" id="3.30.70.330:FF:000275">
    <property type="entry name" value="oligouridylate-binding protein 1B-like isoform X2"/>
    <property type="match status" value="1"/>
</dbReference>
<dbReference type="FunFam" id="3.30.70.330:FF:000191">
    <property type="entry name" value="Oligouridylate-binding protein 1C"/>
    <property type="match status" value="1"/>
</dbReference>
<dbReference type="Gene3D" id="3.30.70.330">
    <property type="match status" value="3"/>
</dbReference>
<dbReference type="InterPro" id="IPR012677">
    <property type="entry name" value="Nucleotide-bd_a/b_plait_sf"/>
</dbReference>
<dbReference type="InterPro" id="IPR035979">
    <property type="entry name" value="RBD_domain_sf"/>
</dbReference>
<dbReference type="InterPro" id="IPR050825">
    <property type="entry name" value="RBM42_RBP45_47-like"/>
</dbReference>
<dbReference type="InterPro" id="IPR000504">
    <property type="entry name" value="RRM_dom"/>
</dbReference>
<dbReference type="PANTHER" id="PTHR47640:SF9">
    <property type="entry name" value="POLYADENYLATE-BINDING PROTEIN RBP47B"/>
    <property type="match status" value="1"/>
</dbReference>
<dbReference type="PANTHER" id="PTHR47640">
    <property type="entry name" value="TRNA SELENOCYSTEINE 1-ASSOCIATED PROTEIN 1-RELATED-RELATED"/>
    <property type="match status" value="1"/>
</dbReference>
<dbReference type="Pfam" id="PF00076">
    <property type="entry name" value="RRM_1"/>
    <property type="match status" value="3"/>
</dbReference>
<dbReference type="SMART" id="SM00360">
    <property type="entry name" value="RRM"/>
    <property type="match status" value="3"/>
</dbReference>
<dbReference type="SUPFAM" id="SSF81995">
    <property type="entry name" value="beta-sandwich domain of Sec23/24"/>
    <property type="match status" value="1"/>
</dbReference>
<dbReference type="SUPFAM" id="SSF54928">
    <property type="entry name" value="RNA-binding domain, RBD"/>
    <property type="match status" value="2"/>
</dbReference>
<dbReference type="PROSITE" id="PS50102">
    <property type="entry name" value="RRM"/>
    <property type="match status" value="3"/>
</dbReference>
<evidence type="ECO:0000250" key="1"/>
<evidence type="ECO:0000250" key="2">
    <source>
        <dbReference type="UniProtKB" id="Q9LQI9"/>
    </source>
</evidence>
<evidence type="ECO:0000255" key="3">
    <source>
        <dbReference type="PROSITE-ProRule" id="PRU00176"/>
    </source>
</evidence>
<evidence type="ECO:0000256" key="4">
    <source>
        <dbReference type="SAM" id="MobiDB-lite"/>
    </source>
</evidence>
<evidence type="ECO:0000269" key="5">
    <source>
    </source>
</evidence>
<accession>Q9SYG4</accession>
<keyword id="KW-0025">Alternative splicing</keyword>
<keyword id="KW-0507">mRNA processing</keyword>
<keyword id="KW-0539">Nucleus</keyword>
<keyword id="KW-0597">Phosphoprotein</keyword>
<keyword id="KW-1185">Reference proteome</keyword>
<keyword id="KW-0677">Repeat</keyword>
<keyword id="KW-0694">RNA-binding</keyword>
<sequence length="426" mass="47234">MQNQRLIKQQQQQQQQQHQQAMIQQAMMQQHPSLYHPGVMAPPQMEPLPSGNLPPGFDPTTCRSVYAGNIHTQVTEILLQEIFASTGPIESCKLIRKDKSSYGFVHYFDRRCASMAIMTLNGRHIFGQPMKVNWAYATGQREDTSSHFNIFVGDLSPEVTDAALFDSFSAFNSCSDARVMWDQKTGRSRGFGFVSFRNQQDAQTAINEMNGKWVSSRQIRCNWATKGATFGEDKHSSDGKSVVELTNGSSEDGRELSNEDAPENNPQFTTVYVGNLSPEVTQLDLHRLFYTLGAGVIEEVRVQRDKGFGFVRYNTHDEAALAIQMGNAQPFLFSRQIRCSWGNKPTPSGTASNPLPPPAPASVPSLSAMDLLAYERQLALAKMHPQAQHSLRQAGLGVNVAGGTAAMYDGGYQNVAAAHQQLMYYQ</sequence>
<reference key="1">
    <citation type="journal article" date="2000" name="Nature">
        <title>Sequence and analysis of chromosome 1 of the plant Arabidopsis thaliana.</title>
        <authorList>
            <person name="Theologis A."/>
            <person name="Ecker J.R."/>
            <person name="Palm C.J."/>
            <person name="Federspiel N.A."/>
            <person name="Kaul S."/>
            <person name="White O."/>
            <person name="Alonso J."/>
            <person name="Altafi H."/>
            <person name="Araujo R."/>
            <person name="Bowman C.L."/>
            <person name="Brooks S.Y."/>
            <person name="Buehler E."/>
            <person name="Chan A."/>
            <person name="Chao Q."/>
            <person name="Chen H."/>
            <person name="Cheuk R.F."/>
            <person name="Chin C.W."/>
            <person name="Chung M.K."/>
            <person name="Conn L."/>
            <person name="Conway A.B."/>
            <person name="Conway A.R."/>
            <person name="Creasy T.H."/>
            <person name="Dewar K."/>
            <person name="Dunn P."/>
            <person name="Etgu P."/>
            <person name="Feldblyum T.V."/>
            <person name="Feng J.-D."/>
            <person name="Fong B."/>
            <person name="Fujii C.Y."/>
            <person name="Gill J.E."/>
            <person name="Goldsmith A.D."/>
            <person name="Haas B."/>
            <person name="Hansen N.F."/>
            <person name="Hughes B."/>
            <person name="Huizar L."/>
            <person name="Hunter J.L."/>
            <person name="Jenkins J."/>
            <person name="Johnson-Hopson C."/>
            <person name="Khan S."/>
            <person name="Khaykin E."/>
            <person name="Kim C.J."/>
            <person name="Koo H.L."/>
            <person name="Kremenetskaia I."/>
            <person name="Kurtz D.B."/>
            <person name="Kwan A."/>
            <person name="Lam B."/>
            <person name="Langin-Hooper S."/>
            <person name="Lee A."/>
            <person name="Lee J.M."/>
            <person name="Lenz C.A."/>
            <person name="Li J.H."/>
            <person name="Li Y.-P."/>
            <person name="Lin X."/>
            <person name="Liu S.X."/>
            <person name="Liu Z.A."/>
            <person name="Luros J.S."/>
            <person name="Maiti R."/>
            <person name="Marziali A."/>
            <person name="Militscher J."/>
            <person name="Miranda M."/>
            <person name="Nguyen M."/>
            <person name="Nierman W.C."/>
            <person name="Osborne B.I."/>
            <person name="Pai G."/>
            <person name="Peterson J."/>
            <person name="Pham P.K."/>
            <person name="Rizzo M."/>
            <person name="Rooney T."/>
            <person name="Rowley D."/>
            <person name="Sakano H."/>
            <person name="Salzberg S.L."/>
            <person name="Schwartz J.R."/>
            <person name="Shinn P."/>
            <person name="Southwick A.M."/>
            <person name="Sun H."/>
            <person name="Tallon L.J."/>
            <person name="Tambunga G."/>
            <person name="Toriumi M.J."/>
            <person name="Town C.D."/>
            <person name="Utterback T."/>
            <person name="Van Aken S."/>
            <person name="Vaysberg M."/>
            <person name="Vysotskaia V.S."/>
            <person name="Walker M."/>
            <person name="Wu D."/>
            <person name="Yu G."/>
            <person name="Fraser C.M."/>
            <person name="Venter J.C."/>
            <person name="Davis R.W."/>
        </authorList>
    </citation>
    <scope>NUCLEOTIDE SEQUENCE [LARGE SCALE GENOMIC DNA]</scope>
    <source>
        <strain>cv. Columbia</strain>
    </source>
</reference>
<reference key="2">
    <citation type="journal article" date="2017" name="Plant J.">
        <title>Araport11: a complete reannotation of the Arabidopsis thaliana reference genome.</title>
        <authorList>
            <person name="Cheng C.Y."/>
            <person name="Krishnakumar V."/>
            <person name="Chan A.P."/>
            <person name="Thibaud-Nissen F."/>
            <person name="Schobel S."/>
            <person name="Town C.D."/>
        </authorList>
    </citation>
    <scope>GENOME REANNOTATION</scope>
    <source>
        <strain>cv. Columbia</strain>
    </source>
</reference>
<reference key="3">
    <citation type="journal article" date="2003" name="Science">
        <title>Empirical analysis of transcriptional activity in the Arabidopsis genome.</title>
        <authorList>
            <person name="Yamada K."/>
            <person name="Lim J."/>
            <person name="Dale J.M."/>
            <person name="Chen H."/>
            <person name="Shinn P."/>
            <person name="Palm C.J."/>
            <person name="Southwick A.M."/>
            <person name="Wu H.C."/>
            <person name="Kim C.J."/>
            <person name="Nguyen M."/>
            <person name="Pham P.K."/>
            <person name="Cheuk R.F."/>
            <person name="Karlin-Newmann G."/>
            <person name="Liu S.X."/>
            <person name="Lam B."/>
            <person name="Sakano H."/>
            <person name="Wu T."/>
            <person name="Yu G."/>
            <person name="Miranda M."/>
            <person name="Quach H.L."/>
            <person name="Tripp M."/>
            <person name="Chang C.H."/>
            <person name="Lee J.M."/>
            <person name="Toriumi M.J."/>
            <person name="Chan M.M."/>
            <person name="Tang C.C."/>
            <person name="Onodera C.S."/>
            <person name="Deng J.M."/>
            <person name="Akiyama K."/>
            <person name="Ansari Y."/>
            <person name="Arakawa T."/>
            <person name="Banh J."/>
            <person name="Banno F."/>
            <person name="Bowser L."/>
            <person name="Brooks S.Y."/>
            <person name="Carninci P."/>
            <person name="Chao Q."/>
            <person name="Choy N."/>
            <person name="Enju A."/>
            <person name="Goldsmith A.D."/>
            <person name="Gurjal M."/>
            <person name="Hansen N.F."/>
            <person name="Hayashizaki Y."/>
            <person name="Johnson-Hopson C."/>
            <person name="Hsuan V.W."/>
            <person name="Iida K."/>
            <person name="Karnes M."/>
            <person name="Khan S."/>
            <person name="Koesema E."/>
            <person name="Ishida J."/>
            <person name="Jiang P.X."/>
            <person name="Jones T."/>
            <person name="Kawai J."/>
            <person name="Kamiya A."/>
            <person name="Meyers C."/>
            <person name="Nakajima M."/>
            <person name="Narusaka M."/>
            <person name="Seki M."/>
            <person name="Sakurai T."/>
            <person name="Satou M."/>
            <person name="Tamse R."/>
            <person name="Vaysberg M."/>
            <person name="Wallender E.K."/>
            <person name="Wong C."/>
            <person name="Yamamura Y."/>
            <person name="Yuan S."/>
            <person name="Shinozaki K."/>
            <person name="Davis R.W."/>
            <person name="Theologis A."/>
            <person name="Ecker J.R."/>
        </authorList>
    </citation>
    <scope>NUCLEOTIDE SEQUENCE [LARGE SCALE MRNA]</scope>
    <source>
        <strain>cv. Columbia</strain>
    </source>
</reference>
<reference key="4">
    <citation type="journal article" date="2002" name="Mol. Cell. Biol.">
        <title>UBA1 and UBA2, two proteins that interact with UBP1, a multifunctional effector of pre-mRNA maturation in plants.</title>
        <authorList>
            <person name="Lambermon M.H."/>
            <person name="Fu Y."/>
            <person name="Wieczorek Kirk D.A."/>
            <person name="Dupasquier M."/>
            <person name="Filipowicz W."/>
            <person name="Lorkovic Z.J."/>
        </authorList>
    </citation>
    <scope>INTERACTION WITH UBA1A AND UBA2A</scope>
</reference>
<reference key="5">
    <citation type="journal article" date="2009" name="J. Proteomics">
        <title>Phosphoproteomic analysis of nuclei-enriched fractions from Arabidopsis thaliana.</title>
        <authorList>
            <person name="Jones A.M.E."/>
            <person name="MacLean D."/>
            <person name="Studholme D.J."/>
            <person name="Serna-Sanz A."/>
            <person name="Andreasson E."/>
            <person name="Rathjen J.P."/>
            <person name="Peck S.C."/>
        </authorList>
    </citation>
    <scope>IDENTIFICATION BY MASS SPECTROMETRY [LARGE SCALE ANALYSIS]</scope>
    <source>
        <strain>cv. Columbia</strain>
    </source>
</reference>
<reference key="6">
    <citation type="journal article" date="2009" name="Plant Physiol.">
        <title>Large-scale Arabidopsis phosphoproteome profiling reveals novel chloroplast kinase substrates and phosphorylation networks.</title>
        <authorList>
            <person name="Reiland S."/>
            <person name="Messerli G."/>
            <person name="Baerenfaller K."/>
            <person name="Gerrits B."/>
            <person name="Endler A."/>
            <person name="Grossmann J."/>
            <person name="Gruissem W."/>
            <person name="Baginsky S."/>
        </authorList>
    </citation>
    <scope>IDENTIFICATION BY MASS SPECTROMETRY [LARGE SCALE ANALYSIS]</scope>
</reference>